<protein>
    <recommendedName>
        <fullName>Tubulin gamma chain</fullName>
    </recommendedName>
    <alternativeName>
        <fullName>Gamma-tubulin</fullName>
    </alternativeName>
</protein>
<gene>
    <name type="primary">TUB4</name>
</gene>
<feature type="chain" id="PRO_0000048482" description="Tubulin gamma chain">
    <location>
        <begin position="1"/>
        <end position="469"/>
    </location>
</feature>
<feature type="binding site" evidence="1">
    <location>
        <begin position="142"/>
        <end position="148"/>
    </location>
    <ligand>
        <name>GTP</name>
        <dbReference type="ChEBI" id="CHEBI:37565"/>
    </ligand>
</feature>
<reference key="1">
    <citation type="journal article" date="1993" name="Gene">
        <title>The gamma-tubulin-encoding gene from the basidiomycete fungus, Ustilago violacea, has a long 5'-untranslated region.</title>
        <authorList>
            <person name="Luo H."/>
            <person name="Perlin M.H."/>
        </authorList>
    </citation>
    <scope>NUCLEOTIDE SEQUENCE [GENOMIC DNA]</scope>
    <source>
        <strain>A(1) Yellow</strain>
    </source>
</reference>
<evidence type="ECO:0000255" key="1"/>
<evidence type="ECO:0000305" key="2"/>
<organism>
    <name type="scientific">Microbotryum violaceum</name>
    <name type="common">Anther smut fungus</name>
    <name type="synonym">Ustilago violacea</name>
    <dbReference type="NCBI Taxonomy" id="5272"/>
    <lineage>
        <taxon>Eukaryota</taxon>
        <taxon>Fungi</taxon>
        <taxon>Dikarya</taxon>
        <taxon>Basidiomycota</taxon>
        <taxon>Pucciniomycotina</taxon>
        <taxon>Microbotryomycetes</taxon>
        <taxon>Microbotryales</taxon>
        <taxon>Microbotryaceae</taxon>
        <taxon>Microbotryum</taxon>
    </lineage>
</organism>
<sequence length="469" mass="52622">MPREILTVSAGQAGNQIGSEFWSQLCAEHGISKEGVLEDWATDMTDRKDVFFYQADDEHYIPRAVMIDLEPRVLDSIKSGPYKNLYNPENFFYDPQGGGAGNNWAKGYAAGERVYEEVMEMIDREAEGSDSLEGFMLLHSIAGGTGSGLGSYLLERMNDRYPKKLIQTYSVFPDADSGDVVVQPYNSLLSMKRLTNHADSVIVLDNAALSKICQDRLHVQVASFAQTNQLVSTVMSASTQTLRYPGYMNNDLVGMIASLIPTPRCHFLTTSYTPFTSDKIEQAKAVRKTTVLDVMRRLLQPKNRLVSMPTTPSRHACYISILNIIQGEVDPTDVHKSLLRIRERNSATFIPWGPASIQVALTKQSPYVQTTHKVSGLMLANHTNIASIFKRTVAQYDQLRKRNAFMPQYQKEAMFEKNLDEFDEARATVQDLIEEYQACEKADYIDYGAGPGYVKGEDRREKGREAVEG</sequence>
<name>TBG_USTVI</name>
<comment type="function">
    <text>Tubulin is the major constituent of microtubules. The gamma chain is found at microtubule organizing centers (MTOC) such as the spindle poles or the centrosome, suggesting that it is involved in the minus-end nucleation of microtubule assembly.</text>
</comment>
<comment type="subcellular location">
    <subcellularLocation>
        <location evidence="2">Cytoplasm</location>
        <location evidence="2">Cytoskeleton</location>
        <location evidence="2">Microtubule organizing center</location>
        <location evidence="2">Spindle pole body</location>
    </subcellularLocation>
</comment>
<comment type="similarity">
    <text evidence="2">Belongs to the tubulin family.</text>
</comment>
<accession>P32348</accession>
<proteinExistence type="inferred from homology"/>
<dbReference type="EMBL" id="X68132">
    <property type="protein sequence ID" value="CAA48239.1"/>
    <property type="molecule type" value="Genomic_DNA"/>
</dbReference>
<dbReference type="PIR" id="S31727">
    <property type="entry name" value="S31727"/>
</dbReference>
<dbReference type="SMR" id="P32348"/>
<dbReference type="PhylomeDB" id="P32348"/>
<dbReference type="GO" id="GO:0005737">
    <property type="term" value="C:cytoplasm"/>
    <property type="evidence" value="ECO:0007669"/>
    <property type="project" value="UniProtKB-KW"/>
</dbReference>
<dbReference type="GO" id="GO:0000930">
    <property type="term" value="C:gamma-tubulin complex"/>
    <property type="evidence" value="ECO:0007669"/>
    <property type="project" value="InterPro"/>
</dbReference>
<dbReference type="GO" id="GO:0005874">
    <property type="term" value="C:microtubule"/>
    <property type="evidence" value="ECO:0007669"/>
    <property type="project" value="UniProtKB-KW"/>
</dbReference>
<dbReference type="GO" id="GO:0005816">
    <property type="term" value="C:spindle pole body"/>
    <property type="evidence" value="ECO:0007669"/>
    <property type="project" value="UniProtKB-SubCell"/>
</dbReference>
<dbReference type="GO" id="GO:0005525">
    <property type="term" value="F:GTP binding"/>
    <property type="evidence" value="ECO:0007669"/>
    <property type="project" value="UniProtKB-KW"/>
</dbReference>
<dbReference type="GO" id="GO:0031122">
    <property type="term" value="P:cytoplasmic microtubule organization"/>
    <property type="evidence" value="ECO:0007669"/>
    <property type="project" value="InterPro"/>
</dbReference>
<dbReference type="GO" id="GO:0007020">
    <property type="term" value="P:microtubule nucleation"/>
    <property type="evidence" value="ECO:0007669"/>
    <property type="project" value="InterPro"/>
</dbReference>
<dbReference type="CDD" id="cd02188">
    <property type="entry name" value="gamma_tubulin"/>
    <property type="match status" value="1"/>
</dbReference>
<dbReference type="FunFam" id="1.10.287.600:FF:000004">
    <property type="entry name" value="Tubulin gamma chain"/>
    <property type="match status" value="1"/>
</dbReference>
<dbReference type="FunFam" id="3.30.1330.20:FF:000003">
    <property type="entry name" value="Tubulin gamma chain"/>
    <property type="match status" value="1"/>
</dbReference>
<dbReference type="FunFam" id="3.40.50.1440:FF:000012">
    <property type="entry name" value="Tubulin gamma chain"/>
    <property type="match status" value="1"/>
</dbReference>
<dbReference type="Gene3D" id="1.10.287.600">
    <property type="entry name" value="Helix hairpin bin"/>
    <property type="match status" value="1"/>
</dbReference>
<dbReference type="Gene3D" id="3.30.1330.20">
    <property type="entry name" value="Tubulin/FtsZ, C-terminal domain"/>
    <property type="match status" value="1"/>
</dbReference>
<dbReference type="Gene3D" id="3.40.50.1440">
    <property type="entry name" value="Tubulin/FtsZ, GTPase domain"/>
    <property type="match status" value="1"/>
</dbReference>
<dbReference type="InterPro" id="IPR002454">
    <property type="entry name" value="Gamma_tubulin"/>
</dbReference>
<dbReference type="InterPro" id="IPR008280">
    <property type="entry name" value="Tub_FtsZ_C"/>
</dbReference>
<dbReference type="InterPro" id="IPR000217">
    <property type="entry name" value="Tubulin"/>
</dbReference>
<dbReference type="InterPro" id="IPR037103">
    <property type="entry name" value="Tubulin/FtsZ-like_C"/>
</dbReference>
<dbReference type="InterPro" id="IPR018316">
    <property type="entry name" value="Tubulin/FtsZ_2-layer-sand-dom"/>
</dbReference>
<dbReference type="InterPro" id="IPR036525">
    <property type="entry name" value="Tubulin/FtsZ_GTPase_sf"/>
</dbReference>
<dbReference type="InterPro" id="IPR023123">
    <property type="entry name" value="Tubulin_C"/>
</dbReference>
<dbReference type="InterPro" id="IPR017975">
    <property type="entry name" value="Tubulin_CS"/>
</dbReference>
<dbReference type="InterPro" id="IPR003008">
    <property type="entry name" value="Tubulin_FtsZ_GTPase"/>
</dbReference>
<dbReference type="PANTHER" id="PTHR11588">
    <property type="entry name" value="TUBULIN"/>
    <property type="match status" value="1"/>
</dbReference>
<dbReference type="Pfam" id="PF00091">
    <property type="entry name" value="Tubulin"/>
    <property type="match status" value="1"/>
</dbReference>
<dbReference type="Pfam" id="PF03953">
    <property type="entry name" value="Tubulin_C"/>
    <property type="match status" value="1"/>
</dbReference>
<dbReference type="PRINTS" id="PR01164">
    <property type="entry name" value="GAMMATUBULIN"/>
</dbReference>
<dbReference type="PRINTS" id="PR01161">
    <property type="entry name" value="TUBULIN"/>
</dbReference>
<dbReference type="SMART" id="SM00864">
    <property type="entry name" value="Tubulin"/>
    <property type="match status" value="1"/>
</dbReference>
<dbReference type="SMART" id="SM00865">
    <property type="entry name" value="Tubulin_C"/>
    <property type="match status" value="1"/>
</dbReference>
<dbReference type="SUPFAM" id="SSF55307">
    <property type="entry name" value="Tubulin C-terminal domain-like"/>
    <property type="match status" value="1"/>
</dbReference>
<dbReference type="SUPFAM" id="SSF52490">
    <property type="entry name" value="Tubulin nucleotide-binding domain-like"/>
    <property type="match status" value="1"/>
</dbReference>
<dbReference type="PROSITE" id="PS00227">
    <property type="entry name" value="TUBULIN"/>
    <property type="match status" value="1"/>
</dbReference>
<keyword id="KW-0963">Cytoplasm</keyword>
<keyword id="KW-0206">Cytoskeleton</keyword>
<keyword id="KW-0342">GTP-binding</keyword>
<keyword id="KW-0493">Microtubule</keyword>
<keyword id="KW-0547">Nucleotide-binding</keyword>